<reference key="1">
    <citation type="journal article" date="2003" name="Lancet">
        <title>Genome sequence of Vibrio parahaemolyticus: a pathogenic mechanism distinct from that of V. cholerae.</title>
        <authorList>
            <person name="Makino K."/>
            <person name="Oshima K."/>
            <person name="Kurokawa K."/>
            <person name="Yokoyama K."/>
            <person name="Uda T."/>
            <person name="Tagomori K."/>
            <person name="Iijima Y."/>
            <person name="Najima M."/>
            <person name="Nakano M."/>
            <person name="Yamashita A."/>
            <person name="Kubota Y."/>
            <person name="Kimura S."/>
            <person name="Yasunaga T."/>
            <person name="Honda T."/>
            <person name="Shinagawa H."/>
            <person name="Hattori M."/>
            <person name="Iida T."/>
        </authorList>
    </citation>
    <scope>NUCLEOTIDE SEQUENCE [LARGE SCALE GENOMIC DNA]</scope>
    <source>
        <strain>RIMD 2210633</strain>
    </source>
</reference>
<keyword id="KW-0378">Hydrolase</keyword>
<keyword id="KW-0460">Magnesium</keyword>
<keyword id="KW-0479">Metal-binding</keyword>
<keyword id="KW-0704">Schiff base</keyword>
<name>PHNX_VIBPA</name>
<dbReference type="EC" id="3.11.1.1" evidence="1"/>
<dbReference type="EMBL" id="BA000032">
    <property type="protein sequence ID" value="BAC61576.1"/>
    <property type="molecule type" value="Genomic_DNA"/>
</dbReference>
<dbReference type="RefSeq" id="NP_799743.1">
    <property type="nucleotide sequence ID" value="NC_004605.1"/>
</dbReference>
<dbReference type="RefSeq" id="WP_005464042.1">
    <property type="nucleotide sequence ID" value="NC_004605.1"/>
</dbReference>
<dbReference type="SMR" id="Q87JL6"/>
<dbReference type="GeneID" id="1190921"/>
<dbReference type="KEGG" id="vpa:VPA0233"/>
<dbReference type="PATRIC" id="fig|223926.6.peg.3188"/>
<dbReference type="eggNOG" id="COG0637">
    <property type="taxonomic scope" value="Bacteria"/>
</dbReference>
<dbReference type="HOGENOM" id="CLU_045011_12_0_6"/>
<dbReference type="Proteomes" id="UP000002493">
    <property type="component" value="Chromosome 2"/>
</dbReference>
<dbReference type="GO" id="GO:0005829">
    <property type="term" value="C:cytosol"/>
    <property type="evidence" value="ECO:0007669"/>
    <property type="project" value="TreeGrafter"/>
</dbReference>
<dbReference type="GO" id="GO:0000287">
    <property type="term" value="F:magnesium ion binding"/>
    <property type="evidence" value="ECO:0007669"/>
    <property type="project" value="UniProtKB-UniRule"/>
</dbReference>
<dbReference type="GO" id="GO:0008967">
    <property type="term" value="F:phosphoglycolate phosphatase activity"/>
    <property type="evidence" value="ECO:0007669"/>
    <property type="project" value="TreeGrafter"/>
</dbReference>
<dbReference type="GO" id="GO:0050194">
    <property type="term" value="F:phosphonoacetaldehyde hydrolase activity"/>
    <property type="evidence" value="ECO:0007669"/>
    <property type="project" value="UniProtKB-UniRule"/>
</dbReference>
<dbReference type="GO" id="GO:0006281">
    <property type="term" value="P:DNA repair"/>
    <property type="evidence" value="ECO:0007669"/>
    <property type="project" value="TreeGrafter"/>
</dbReference>
<dbReference type="GO" id="GO:0019700">
    <property type="term" value="P:organic phosphonate catabolic process"/>
    <property type="evidence" value="ECO:0007669"/>
    <property type="project" value="InterPro"/>
</dbReference>
<dbReference type="CDD" id="cd02586">
    <property type="entry name" value="HAD_PHN"/>
    <property type="match status" value="1"/>
</dbReference>
<dbReference type="FunFam" id="1.10.150.240:FF:000006">
    <property type="entry name" value="Phosphonoacetaldehyde hydrolase"/>
    <property type="match status" value="1"/>
</dbReference>
<dbReference type="Gene3D" id="3.40.50.1000">
    <property type="entry name" value="HAD superfamily/HAD-like"/>
    <property type="match status" value="1"/>
</dbReference>
<dbReference type="Gene3D" id="1.10.150.240">
    <property type="entry name" value="Putative phosphatase, domain 2"/>
    <property type="match status" value="1"/>
</dbReference>
<dbReference type="HAMAP" id="MF_01375">
    <property type="entry name" value="PhnX"/>
    <property type="match status" value="1"/>
</dbReference>
<dbReference type="InterPro" id="IPR050155">
    <property type="entry name" value="HAD-like_hydrolase_sf"/>
</dbReference>
<dbReference type="InterPro" id="IPR036412">
    <property type="entry name" value="HAD-like_sf"/>
</dbReference>
<dbReference type="InterPro" id="IPR006439">
    <property type="entry name" value="HAD-SF_hydro_IA"/>
</dbReference>
<dbReference type="InterPro" id="IPR023214">
    <property type="entry name" value="HAD_sf"/>
</dbReference>
<dbReference type="InterPro" id="IPR023198">
    <property type="entry name" value="PGP-like_dom2"/>
</dbReference>
<dbReference type="InterPro" id="IPR006323">
    <property type="entry name" value="Phosphonoacetald_hydro"/>
</dbReference>
<dbReference type="NCBIfam" id="TIGR01509">
    <property type="entry name" value="HAD-SF-IA-v3"/>
    <property type="match status" value="1"/>
</dbReference>
<dbReference type="NCBIfam" id="TIGR01422">
    <property type="entry name" value="phosphonatase"/>
    <property type="match status" value="1"/>
</dbReference>
<dbReference type="PANTHER" id="PTHR43434">
    <property type="entry name" value="PHOSPHOGLYCOLATE PHOSPHATASE"/>
    <property type="match status" value="1"/>
</dbReference>
<dbReference type="PANTHER" id="PTHR43434:SF19">
    <property type="entry name" value="PHOSPHONOACETALDEHYDE HYDROLASE"/>
    <property type="match status" value="1"/>
</dbReference>
<dbReference type="Pfam" id="PF00702">
    <property type="entry name" value="Hydrolase"/>
    <property type="match status" value="1"/>
</dbReference>
<dbReference type="SFLD" id="SFLDS00003">
    <property type="entry name" value="Haloacid_Dehalogenase"/>
    <property type="match status" value="1"/>
</dbReference>
<dbReference type="SFLD" id="SFLDF00038">
    <property type="entry name" value="phosphonoacetaldehyde_hydrolas"/>
    <property type="match status" value="1"/>
</dbReference>
<dbReference type="SUPFAM" id="SSF56784">
    <property type="entry name" value="HAD-like"/>
    <property type="match status" value="1"/>
</dbReference>
<evidence type="ECO:0000255" key="1">
    <source>
        <dbReference type="HAMAP-Rule" id="MF_01375"/>
    </source>
</evidence>
<sequence length="271" mass="29649">MSNSPIQAVIFDWAGTIVDFGSFAPTSIFVEAFKQGFDFDIDLEEAREPMGLGKWDHIQAVGRIPAVDKRWNEKFGRSMTNEDIDAIYAAFMPLQKAKVADHAEPILNAVEVVNGLKDKGIKIGSCSGYPREVMDVLIPVAADYGYQPDYVVATDDLPQGGRPAPFMALKNVIELDVTDVKACVKVDDSAPGIFEGHNAGMWTVGLLLSGNEAGLTFEEYQAADEATLEKAREKARAKFIKSAPHYLIDTISDLPEVIVDIEQRLAAGERP</sequence>
<feature type="chain" id="PRO_0000284604" description="Phosphonoacetaldehyde hydrolase">
    <location>
        <begin position="1"/>
        <end position="271"/>
    </location>
</feature>
<feature type="active site" description="Nucleophile" evidence="1">
    <location>
        <position position="12"/>
    </location>
</feature>
<feature type="active site" description="Schiff-base intermediate with substrate" evidence="1">
    <location>
        <position position="54"/>
    </location>
</feature>
<feature type="binding site" evidence="1">
    <location>
        <position position="12"/>
    </location>
    <ligand>
        <name>Mg(2+)</name>
        <dbReference type="ChEBI" id="CHEBI:18420"/>
    </ligand>
</feature>
<feature type="binding site" evidence="1">
    <location>
        <position position="14"/>
    </location>
    <ligand>
        <name>Mg(2+)</name>
        <dbReference type="ChEBI" id="CHEBI:18420"/>
    </ligand>
</feature>
<feature type="binding site" evidence="1">
    <location>
        <position position="188"/>
    </location>
    <ligand>
        <name>Mg(2+)</name>
        <dbReference type="ChEBI" id="CHEBI:18420"/>
    </ligand>
</feature>
<protein>
    <recommendedName>
        <fullName evidence="1">Phosphonoacetaldehyde hydrolase</fullName>
        <shortName evidence="1">Phosphonatase</shortName>
        <ecNumber evidence="1">3.11.1.1</ecNumber>
    </recommendedName>
    <alternativeName>
        <fullName evidence="1">Phosphonoacetaldehyde phosphonohydrolase</fullName>
    </alternativeName>
</protein>
<organism>
    <name type="scientific">Vibrio parahaemolyticus serotype O3:K6 (strain RIMD 2210633)</name>
    <dbReference type="NCBI Taxonomy" id="223926"/>
    <lineage>
        <taxon>Bacteria</taxon>
        <taxon>Pseudomonadati</taxon>
        <taxon>Pseudomonadota</taxon>
        <taxon>Gammaproteobacteria</taxon>
        <taxon>Vibrionales</taxon>
        <taxon>Vibrionaceae</taxon>
        <taxon>Vibrio</taxon>
    </lineage>
</organism>
<accession>Q87JL6</accession>
<gene>
    <name evidence="1" type="primary">phnX</name>
    <name type="ordered locus">VPA0233</name>
</gene>
<comment type="function">
    <text evidence="1">Involved in phosphonate degradation.</text>
</comment>
<comment type="catalytic activity">
    <reaction evidence="1">
        <text>phosphonoacetaldehyde + H2O = acetaldehyde + phosphate + H(+)</text>
        <dbReference type="Rhea" id="RHEA:18905"/>
        <dbReference type="ChEBI" id="CHEBI:15343"/>
        <dbReference type="ChEBI" id="CHEBI:15377"/>
        <dbReference type="ChEBI" id="CHEBI:15378"/>
        <dbReference type="ChEBI" id="CHEBI:43474"/>
        <dbReference type="ChEBI" id="CHEBI:58383"/>
        <dbReference type="EC" id="3.11.1.1"/>
    </reaction>
</comment>
<comment type="cofactor">
    <cofactor evidence="1">
        <name>Mg(2+)</name>
        <dbReference type="ChEBI" id="CHEBI:18420"/>
    </cofactor>
    <text evidence="1">Binds 1 Mg(2+) ion per subunit.</text>
</comment>
<comment type="subunit">
    <text evidence="1">Homodimer.</text>
</comment>
<comment type="similarity">
    <text evidence="1">Belongs to the HAD-like hydrolase superfamily. PhnX family.</text>
</comment>
<proteinExistence type="inferred from homology"/>